<evidence type="ECO:0000250" key="1"/>
<evidence type="ECO:0000255" key="2">
    <source>
        <dbReference type="HAMAP-Rule" id="MF_00047"/>
    </source>
</evidence>
<reference key="1">
    <citation type="submission" date="2007-07" db="EMBL/GenBank/DDBJ databases">
        <title>Complete sequence of Fervidobacterium nodosum Rt17-B1.</title>
        <authorList>
            <consortium name="US DOE Joint Genome Institute"/>
            <person name="Copeland A."/>
            <person name="Lucas S."/>
            <person name="Lapidus A."/>
            <person name="Barry K."/>
            <person name="Glavina del Rio T."/>
            <person name="Dalin E."/>
            <person name="Tice H."/>
            <person name="Pitluck S."/>
            <person name="Saunders E."/>
            <person name="Brettin T."/>
            <person name="Bruce D."/>
            <person name="Detter J.C."/>
            <person name="Han C."/>
            <person name="Schmutz J."/>
            <person name="Larimer F."/>
            <person name="Land M."/>
            <person name="Hauser L."/>
            <person name="Kyrpides N."/>
            <person name="Mikhailova N."/>
            <person name="Nelson K."/>
            <person name="Gogarten J.P."/>
            <person name="Noll K."/>
            <person name="Richardson P."/>
        </authorList>
    </citation>
    <scope>NUCLEOTIDE SEQUENCE [LARGE SCALE GENOMIC DNA]</scope>
    <source>
        <strain>ATCC 35602 / DSM 5306 / Rt17-B1</strain>
    </source>
</reference>
<name>DDL_FERNB</name>
<sequence>MYLGVLLGGISREREISIRSGKRIAQALRNMGHVVDEIDVDDNFIYKLSELKKYDALFNILHGTFGEDGKMQAILDSIGIPYTGSGVETSVIAFDKYLCNLFVENTIERYEELSVVKIPNFLLISSEEFEESKIYMIEEKIGLPCVVKPRKEGSSIGTHICFSKEELLDALKNEFKNYDEMIVQEYIKGKEITVSVIDINGTPTVLPILELRPKKLFYDYEAKYTDGMTEFIIPAELDGETTEKINHAVLKIYKSLGCKHFSRIDGIVKDGVFYFLEVNTLPGMTELSDLPMSANAFGISFDELVDLIIKEACRKL</sequence>
<accession>A7HNE8</accession>
<gene>
    <name evidence="2" type="primary">ddl</name>
    <name type="ordered locus">Fnod_1588</name>
</gene>
<feature type="chain" id="PRO_1000071101" description="D-alanine--D-alanine ligase">
    <location>
        <begin position="1"/>
        <end position="316"/>
    </location>
</feature>
<feature type="domain" description="ATP-grasp" evidence="2">
    <location>
        <begin position="108"/>
        <end position="310"/>
    </location>
</feature>
<feature type="binding site" evidence="2">
    <location>
        <begin position="138"/>
        <end position="193"/>
    </location>
    <ligand>
        <name>ATP</name>
        <dbReference type="ChEBI" id="CHEBI:30616"/>
    </ligand>
</feature>
<feature type="binding site" evidence="2">
    <location>
        <position position="265"/>
    </location>
    <ligand>
        <name>Mg(2+)</name>
        <dbReference type="ChEBI" id="CHEBI:18420"/>
        <label>1</label>
    </ligand>
</feature>
<feature type="binding site" evidence="2">
    <location>
        <position position="277"/>
    </location>
    <ligand>
        <name>Mg(2+)</name>
        <dbReference type="ChEBI" id="CHEBI:18420"/>
        <label>1</label>
    </ligand>
</feature>
<feature type="binding site" evidence="2">
    <location>
        <position position="277"/>
    </location>
    <ligand>
        <name>Mg(2+)</name>
        <dbReference type="ChEBI" id="CHEBI:18420"/>
        <label>2</label>
    </ligand>
</feature>
<feature type="binding site" evidence="2">
    <location>
        <position position="279"/>
    </location>
    <ligand>
        <name>Mg(2+)</name>
        <dbReference type="ChEBI" id="CHEBI:18420"/>
        <label>2</label>
    </ligand>
</feature>
<organism>
    <name type="scientific">Fervidobacterium nodosum (strain ATCC 35602 / DSM 5306 / Rt17-B1)</name>
    <dbReference type="NCBI Taxonomy" id="381764"/>
    <lineage>
        <taxon>Bacteria</taxon>
        <taxon>Thermotogati</taxon>
        <taxon>Thermotogota</taxon>
        <taxon>Thermotogae</taxon>
        <taxon>Thermotogales</taxon>
        <taxon>Fervidobacteriaceae</taxon>
        <taxon>Fervidobacterium</taxon>
    </lineage>
</organism>
<proteinExistence type="inferred from homology"/>
<protein>
    <recommendedName>
        <fullName evidence="2">D-alanine--D-alanine ligase</fullName>
        <ecNumber evidence="2">6.3.2.4</ecNumber>
    </recommendedName>
    <alternativeName>
        <fullName evidence="2">D-Ala-D-Ala ligase</fullName>
    </alternativeName>
    <alternativeName>
        <fullName evidence="2">D-alanylalanine synthetase</fullName>
    </alternativeName>
</protein>
<comment type="function">
    <text evidence="2">Cell wall formation.</text>
</comment>
<comment type="catalytic activity">
    <reaction evidence="2">
        <text>2 D-alanine + ATP = D-alanyl-D-alanine + ADP + phosphate + H(+)</text>
        <dbReference type="Rhea" id="RHEA:11224"/>
        <dbReference type="ChEBI" id="CHEBI:15378"/>
        <dbReference type="ChEBI" id="CHEBI:30616"/>
        <dbReference type="ChEBI" id="CHEBI:43474"/>
        <dbReference type="ChEBI" id="CHEBI:57416"/>
        <dbReference type="ChEBI" id="CHEBI:57822"/>
        <dbReference type="ChEBI" id="CHEBI:456216"/>
        <dbReference type="EC" id="6.3.2.4"/>
    </reaction>
</comment>
<comment type="cofactor">
    <cofactor evidence="1">
        <name>Mg(2+)</name>
        <dbReference type="ChEBI" id="CHEBI:18420"/>
    </cofactor>
    <cofactor evidence="1">
        <name>Mn(2+)</name>
        <dbReference type="ChEBI" id="CHEBI:29035"/>
    </cofactor>
    <text evidence="1">Binds 2 magnesium or manganese ions per subunit.</text>
</comment>
<comment type="pathway">
    <text evidence="2">Cell wall biogenesis; peptidoglycan biosynthesis.</text>
</comment>
<comment type="subcellular location">
    <subcellularLocation>
        <location evidence="2">Cytoplasm</location>
    </subcellularLocation>
</comment>
<comment type="similarity">
    <text evidence="2">Belongs to the D-alanine--D-alanine ligase family.</text>
</comment>
<keyword id="KW-0067">ATP-binding</keyword>
<keyword id="KW-0133">Cell shape</keyword>
<keyword id="KW-0961">Cell wall biogenesis/degradation</keyword>
<keyword id="KW-0963">Cytoplasm</keyword>
<keyword id="KW-0436">Ligase</keyword>
<keyword id="KW-0460">Magnesium</keyword>
<keyword id="KW-0464">Manganese</keyword>
<keyword id="KW-0479">Metal-binding</keyword>
<keyword id="KW-0547">Nucleotide-binding</keyword>
<keyword id="KW-0573">Peptidoglycan synthesis</keyword>
<keyword id="KW-1185">Reference proteome</keyword>
<dbReference type="EC" id="6.3.2.4" evidence="2"/>
<dbReference type="EMBL" id="CP000771">
    <property type="protein sequence ID" value="ABS61431.1"/>
    <property type="molecule type" value="Genomic_DNA"/>
</dbReference>
<dbReference type="RefSeq" id="WP_011994733.1">
    <property type="nucleotide sequence ID" value="NC_009718.1"/>
</dbReference>
<dbReference type="SMR" id="A7HNE8"/>
<dbReference type="STRING" id="381764.Fnod_1588"/>
<dbReference type="KEGG" id="fno:Fnod_1588"/>
<dbReference type="eggNOG" id="COG1181">
    <property type="taxonomic scope" value="Bacteria"/>
</dbReference>
<dbReference type="HOGENOM" id="CLU_039268_1_1_0"/>
<dbReference type="OrthoDB" id="9813261at2"/>
<dbReference type="UniPathway" id="UPA00219"/>
<dbReference type="Proteomes" id="UP000002415">
    <property type="component" value="Chromosome"/>
</dbReference>
<dbReference type="GO" id="GO:0005737">
    <property type="term" value="C:cytoplasm"/>
    <property type="evidence" value="ECO:0007669"/>
    <property type="project" value="UniProtKB-SubCell"/>
</dbReference>
<dbReference type="GO" id="GO:0005524">
    <property type="term" value="F:ATP binding"/>
    <property type="evidence" value="ECO:0007669"/>
    <property type="project" value="UniProtKB-KW"/>
</dbReference>
<dbReference type="GO" id="GO:0008716">
    <property type="term" value="F:D-alanine-D-alanine ligase activity"/>
    <property type="evidence" value="ECO:0007669"/>
    <property type="project" value="UniProtKB-UniRule"/>
</dbReference>
<dbReference type="GO" id="GO:0046872">
    <property type="term" value="F:metal ion binding"/>
    <property type="evidence" value="ECO:0007669"/>
    <property type="project" value="UniProtKB-KW"/>
</dbReference>
<dbReference type="GO" id="GO:0071555">
    <property type="term" value="P:cell wall organization"/>
    <property type="evidence" value="ECO:0007669"/>
    <property type="project" value="UniProtKB-KW"/>
</dbReference>
<dbReference type="GO" id="GO:0009252">
    <property type="term" value="P:peptidoglycan biosynthetic process"/>
    <property type="evidence" value="ECO:0007669"/>
    <property type="project" value="UniProtKB-UniRule"/>
</dbReference>
<dbReference type="GO" id="GO:0008360">
    <property type="term" value="P:regulation of cell shape"/>
    <property type="evidence" value="ECO:0007669"/>
    <property type="project" value="UniProtKB-KW"/>
</dbReference>
<dbReference type="Gene3D" id="3.40.50.20">
    <property type="match status" value="1"/>
</dbReference>
<dbReference type="Gene3D" id="3.30.1490.20">
    <property type="entry name" value="ATP-grasp fold, A domain"/>
    <property type="match status" value="1"/>
</dbReference>
<dbReference type="Gene3D" id="3.30.470.20">
    <property type="entry name" value="ATP-grasp fold, B domain"/>
    <property type="match status" value="1"/>
</dbReference>
<dbReference type="HAMAP" id="MF_00047">
    <property type="entry name" value="Dala_Dala_lig"/>
    <property type="match status" value="1"/>
</dbReference>
<dbReference type="InterPro" id="IPR011761">
    <property type="entry name" value="ATP-grasp"/>
</dbReference>
<dbReference type="InterPro" id="IPR013815">
    <property type="entry name" value="ATP_grasp_subdomain_1"/>
</dbReference>
<dbReference type="InterPro" id="IPR000291">
    <property type="entry name" value="D-Ala_lig_Van_CS"/>
</dbReference>
<dbReference type="InterPro" id="IPR005905">
    <property type="entry name" value="D_ala_D_ala"/>
</dbReference>
<dbReference type="InterPro" id="IPR011095">
    <property type="entry name" value="Dala_Dala_lig_C"/>
</dbReference>
<dbReference type="InterPro" id="IPR011127">
    <property type="entry name" value="Dala_Dala_lig_N"/>
</dbReference>
<dbReference type="InterPro" id="IPR016185">
    <property type="entry name" value="PreATP-grasp_dom_sf"/>
</dbReference>
<dbReference type="NCBIfam" id="TIGR01205">
    <property type="entry name" value="D_ala_D_alaTIGR"/>
    <property type="match status" value="1"/>
</dbReference>
<dbReference type="NCBIfam" id="NF002378">
    <property type="entry name" value="PRK01372.1"/>
    <property type="match status" value="1"/>
</dbReference>
<dbReference type="NCBIfam" id="NF011169">
    <property type="entry name" value="PRK14571.1"/>
    <property type="match status" value="1"/>
</dbReference>
<dbReference type="PANTHER" id="PTHR23132">
    <property type="entry name" value="D-ALANINE--D-ALANINE LIGASE"/>
    <property type="match status" value="1"/>
</dbReference>
<dbReference type="PANTHER" id="PTHR23132:SF23">
    <property type="entry name" value="D-ALANINE--D-ALANINE LIGASE B"/>
    <property type="match status" value="1"/>
</dbReference>
<dbReference type="Pfam" id="PF07478">
    <property type="entry name" value="Dala_Dala_lig_C"/>
    <property type="match status" value="1"/>
</dbReference>
<dbReference type="Pfam" id="PF01820">
    <property type="entry name" value="Dala_Dala_lig_N"/>
    <property type="match status" value="1"/>
</dbReference>
<dbReference type="PIRSF" id="PIRSF039102">
    <property type="entry name" value="Ddl/VanB"/>
    <property type="match status" value="1"/>
</dbReference>
<dbReference type="SUPFAM" id="SSF56059">
    <property type="entry name" value="Glutathione synthetase ATP-binding domain-like"/>
    <property type="match status" value="1"/>
</dbReference>
<dbReference type="SUPFAM" id="SSF52440">
    <property type="entry name" value="PreATP-grasp domain"/>
    <property type="match status" value="1"/>
</dbReference>
<dbReference type="PROSITE" id="PS50975">
    <property type="entry name" value="ATP_GRASP"/>
    <property type="match status" value="1"/>
</dbReference>
<dbReference type="PROSITE" id="PS00843">
    <property type="entry name" value="DALA_DALA_LIGASE_1"/>
    <property type="match status" value="1"/>
</dbReference>
<dbReference type="PROSITE" id="PS00844">
    <property type="entry name" value="DALA_DALA_LIGASE_2"/>
    <property type="match status" value="1"/>
</dbReference>